<proteinExistence type="predicted"/>
<gene>
    <name type="primary">tagC</name>
    <name type="synonym">dinC</name>
    <name type="ordered locus">BSU35770</name>
</gene>
<accession>P27622</accession>
<name>TAGC_BACSU</name>
<organism>
    <name type="scientific">Bacillus subtilis (strain 168)</name>
    <dbReference type="NCBI Taxonomy" id="224308"/>
    <lineage>
        <taxon>Bacteria</taxon>
        <taxon>Bacillati</taxon>
        <taxon>Bacillota</taxon>
        <taxon>Bacilli</taxon>
        <taxon>Bacillales</taxon>
        <taxon>Bacillaceae</taxon>
        <taxon>Bacillus</taxon>
    </lineage>
</organism>
<comment type="function">
    <text>Unknown. Might be involved in poly(glycerol phosphate) teichoic acid biosynthesis.</text>
</comment>
<sequence length="442" mass="50826">MRKKELFDFTNITPKLFTELRVADKTVLQSFNFDEKNHQIYTTQVASGLGKDNTQSYRITRLSLEGLQLDSMLLKHGGHGTNIGIENRNGTIYIWSLYDKPNETDKSELVCFPYKAGATLDENSKELQRFSNMPFDHRVTPALDMKNRQLAIRQYDTKNNNNKQWVTIFNLDDAIANKNNPLYTINIPDELHYLQGFFLDDGYLYWYTGDTNSKSYPNLITVFDSDNKIVLQKEITVGKDLSTRYENNFREPEGICMYTNPETGAKSLMVGITSGKEGNRISRIYAYHSYENFMNHVPMLRSPLLKTVGHQDTPPERFQPFIQTFILEYNAQNKKWMVPTSGYLPSYTSNLVRNITINADGNLQVTLNERYISLLHQSIEGDFRLKQKDIRMGSWYFAGGEKSNVLEIGFMKGSTKIRPDDAAISNASRMSIFMIVADKIEV</sequence>
<keyword id="KW-0961">Cell wall biogenesis/degradation</keyword>
<keyword id="KW-1185">Reference proteome</keyword>
<keyword id="KW-0777">Teichoic acid biosynthesis</keyword>
<evidence type="ECO:0000305" key="1"/>
<protein>
    <recommendedName>
        <fullName>Putative major teichoic acid biosynthesis protein C</fullName>
    </recommendedName>
</protein>
<feature type="chain" id="PRO_0000072421" description="Putative major teichoic acid biosynthesis protein C">
    <location>
        <begin position="1"/>
        <end position="442"/>
    </location>
</feature>
<feature type="sequence conflict" description="In Ref. 3; AAA22391." evidence="1" ref="3">
    <original>I</original>
    <variation>M</variation>
    <location>
        <position position="85"/>
    </location>
</feature>
<reference key="1">
    <citation type="journal article" date="1991" name="J. Gen. Microbiol.">
        <title>Genes concerned with synthesis of poly(glycerol phosphate), the essential teichoic acid in Bacillus subtilis strain 168, are organized in two divergent transcription units.</title>
        <authorList>
            <person name="Maueel C."/>
            <person name="Young M."/>
            <person name="Karamata D."/>
        </authorList>
    </citation>
    <scope>NUCLEOTIDE SEQUENCE [GENOMIC DNA]</scope>
    <source>
        <strain>168</strain>
    </source>
</reference>
<reference key="2">
    <citation type="journal article" date="1997" name="Nature">
        <title>The complete genome sequence of the Gram-positive bacterium Bacillus subtilis.</title>
        <authorList>
            <person name="Kunst F."/>
            <person name="Ogasawara N."/>
            <person name="Moszer I."/>
            <person name="Albertini A.M."/>
            <person name="Alloni G."/>
            <person name="Azevedo V."/>
            <person name="Bertero M.G."/>
            <person name="Bessieres P."/>
            <person name="Bolotin A."/>
            <person name="Borchert S."/>
            <person name="Borriss R."/>
            <person name="Boursier L."/>
            <person name="Brans A."/>
            <person name="Braun M."/>
            <person name="Brignell S.C."/>
            <person name="Bron S."/>
            <person name="Brouillet S."/>
            <person name="Bruschi C.V."/>
            <person name="Caldwell B."/>
            <person name="Capuano V."/>
            <person name="Carter N.M."/>
            <person name="Choi S.-K."/>
            <person name="Codani J.-J."/>
            <person name="Connerton I.F."/>
            <person name="Cummings N.J."/>
            <person name="Daniel R.A."/>
            <person name="Denizot F."/>
            <person name="Devine K.M."/>
            <person name="Duesterhoeft A."/>
            <person name="Ehrlich S.D."/>
            <person name="Emmerson P.T."/>
            <person name="Entian K.-D."/>
            <person name="Errington J."/>
            <person name="Fabret C."/>
            <person name="Ferrari E."/>
            <person name="Foulger D."/>
            <person name="Fritz C."/>
            <person name="Fujita M."/>
            <person name="Fujita Y."/>
            <person name="Fuma S."/>
            <person name="Galizzi A."/>
            <person name="Galleron N."/>
            <person name="Ghim S.-Y."/>
            <person name="Glaser P."/>
            <person name="Goffeau A."/>
            <person name="Golightly E.J."/>
            <person name="Grandi G."/>
            <person name="Guiseppi G."/>
            <person name="Guy B.J."/>
            <person name="Haga K."/>
            <person name="Haiech J."/>
            <person name="Harwood C.R."/>
            <person name="Henaut A."/>
            <person name="Hilbert H."/>
            <person name="Holsappel S."/>
            <person name="Hosono S."/>
            <person name="Hullo M.-F."/>
            <person name="Itaya M."/>
            <person name="Jones L.-M."/>
            <person name="Joris B."/>
            <person name="Karamata D."/>
            <person name="Kasahara Y."/>
            <person name="Klaerr-Blanchard M."/>
            <person name="Klein C."/>
            <person name="Kobayashi Y."/>
            <person name="Koetter P."/>
            <person name="Koningstein G."/>
            <person name="Krogh S."/>
            <person name="Kumano M."/>
            <person name="Kurita K."/>
            <person name="Lapidus A."/>
            <person name="Lardinois S."/>
            <person name="Lauber J."/>
            <person name="Lazarevic V."/>
            <person name="Lee S.-M."/>
            <person name="Levine A."/>
            <person name="Liu H."/>
            <person name="Masuda S."/>
            <person name="Mauel C."/>
            <person name="Medigue C."/>
            <person name="Medina N."/>
            <person name="Mellado R.P."/>
            <person name="Mizuno M."/>
            <person name="Moestl D."/>
            <person name="Nakai S."/>
            <person name="Noback M."/>
            <person name="Noone D."/>
            <person name="O'Reilly M."/>
            <person name="Ogawa K."/>
            <person name="Ogiwara A."/>
            <person name="Oudega B."/>
            <person name="Park S.-H."/>
            <person name="Parro V."/>
            <person name="Pohl T.M."/>
            <person name="Portetelle D."/>
            <person name="Porwollik S."/>
            <person name="Prescott A.M."/>
            <person name="Presecan E."/>
            <person name="Pujic P."/>
            <person name="Purnelle B."/>
            <person name="Rapoport G."/>
            <person name="Rey M."/>
            <person name="Reynolds S."/>
            <person name="Rieger M."/>
            <person name="Rivolta C."/>
            <person name="Rocha E."/>
            <person name="Roche B."/>
            <person name="Rose M."/>
            <person name="Sadaie Y."/>
            <person name="Sato T."/>
            <person name="Scanlan E."/>
            <person name="Schleich S."/>
            <person name="Schroeter R."/>
            <person name="Scoffone F."/>
            <person name="Sekiguchi J."/>
            <person name="Sekowska A."/>
            <person name="Seror S.J."/>
            <person name="Serror P."/>
            <person name="Shin B.-S."/>
            <person name="Soldo B."/>
            <person name="Sorokin A."/>
            <person name="Tacconi E."/>
            <person name="Takagi T."/>
            <person name="Takahashi H."/>
            <person name="Takemaru K."/>
            <person name="Takeuchi M."/>
            <person name="Tamakoshi A."/>
            <person name="Tanaka T."/>
            <person name="Terpstra P."/>
            <person name="Tognoni A."/>
            <person name="Tosato V."/>
            <person name="Uchiyama S."/>
            <person name="Vandenbol M."/>
            <person name="Vannier F."/>
            <person name="Vassarotti A."/>
            <person name="Viari A."/>
            <person name="Wambutt R."/>
            <person name="Wedler E."/>
            <person name="Wedler H."/>
            <person name="Weitzenegger T."/>
            <person name="Winters P."/>
            <person name="Wipat A."/>
            <person name="Yamamoto H."/>
            <person name="Yamane K."/>
            <person name="Yasumoto K."/>
            <person name="Yata K."/>
            <person name="Yoshida K."/>
            <person name="Yoshikawa H.-F."/>
            <person name="Zumstein E."/>
            <person name="Yoshikawa H."/>
            <person name="Danchin A."/>
        </authorList>
    </citation>
    <scope>NUCLEOTIDE SEQUENCE [LARGE SCALE GENOMIC DNA]</scope>
    <source>
        <strain>168</strain>
    </source>
</reference>
<reference key="3">
    <citation type="journal article" date="1991" name="J. Bacteriol.">
        <title>Cloning and characterization of DNA damage-inducible promoter regions from Bacillus subtilis.</title>
        <authorList>
            <person name="Cheo D.L."/>
            <person name="Bayles K.W."/>
            <person name="Yasbin R.E."/>
        </authorList>
    </citation>
    <scope>NUCLEOTIDE SEQUENCE [GENOMIC DNA] OF 1-125</scope>
</reference>
<dbReference type="EMBL" id="M57497">
    <property type="protein sequence ID" value="AAA22847.1"/>
    <property type="molecule type" value="Genomic_DNA"/>
</dbReference>
<dbReference type="EMBL" id="AL009126">
    <property type="protein sequence ID" value="CAB15594.1"/>
    <property type="molecule type" value="Genomic_DNA"/>
</dbReference>
<dbReference type="EMBL" id="M64050">
    <property type="protein sequence ID" value="AAA22391.1"/>
    <property type="molecule type" value="Genomic_DNA"/>
</dbReference>
<dbReference type="PIR" id="D49757">
    <property type="entry name" value="D49757"/>
</dbReference>
<dbReference type="RefSeq" id="NP_391458.1">
    <property type="nucleotide sequence ID" value="NC_000964.3"/>
</dbReference>
<dbReference type="RefSeq" id="WP_003243411.1">
    <property type="nucleotide sequence ID" value="NZ_OZ025638.1"/>
</dbReference>
<dbReference type="SMR" id="P27622"/>
<dbReference type="FunCoup" id="P27622">
    <property type="interactions" value="68"/>
</dbReference>
<dbReference type="STRING" id="224308.BSU35770"/>
<dbReference type="PaxDb" id="224308-BSU35770"/>
<dbReference type="EnsemblBacteria" id="CAB15594">
    <property type="protein sequence ID" value="CAB15594"/>
    <property type="gene ID" value="BSU_35770"/>
</dbReference>
<dbReference type="GeneID" id="936812"/>
<dbReference type="KEGG" id="bsu:BSU35770"/>
<dbReference type="PATRIC" id="fig|224308.179.peg.3872"/>
<dbReference type="eggNOG" id="ENOG5033GH6">
    <property type="taxonomic scope" value="Bacteria"/>
</dbReference>
<dbReference type="InParanoid" id="P27622"/>
<dbReference type="OrthoDB" id="2412467at2"/>
<dbReference type="BioCyc" id="BSUB:BSU35770-MONOMER"/>
<dbReference type="Proteomes" id="UP000001570">
    <property type="component" value="Chromosome"/>
</dbReference>
<dbReference type="GO" id="GO:0071555">
    <property type="term" value="P:cell wall organization"/>
    <property type="evidence" value="ECO:0007669"/>
    <property type="project" value="UniProtKB-KW"/>
</dbReference>
<dbReference type="GO" id="GO:0019350">
    <property type="term" value="P:teichoic acid biosynthetic process"/>
    <property type="evidence" value="ECO:0007669"/>
    <property type="project" value="UniProtKB-KW"/>
</dbReference>
<dbReference type="InterPro" id="IPR048799">
    <property type="entry name" value="P68_RBP_TagC-like_b_propeller"/>
</dbReference>
<dbReference type="Pfam" id="PF21311">
    <property type="entry name" value="Phage_RBD_prop"/>
    <property type="match status" value="1"/>
</dbReference>
<dbReference type="SUPFAM" id="SSF63825">
    <property type="entry name" value="YWTD domain"/>
    <property type="match status" value="1"/>
</dbReference>